<proteinExistence type="evidence at protein level"/>
<dbReference type="EMBL" id="AB014528">
    <property type="protein sequence ID" value="BAA31603.2"/>
    <property type="status" value="ALT_INIT"/>
    <property type="molecule type" value="mRNA"/>
</dbReference>
<dbReference type="EMBL" id="AK294695">
    <property type="protein sequence ID" value="BAG57854.1"/>
    <property type="status" value="ALT_FRAME"/>
    <property type="molecule type" value="mRNA"/>
</dbReference>
<dbReference type="EMBL" id="AC067930">
    <property type="status" value="NOT_ANNOTATED_CDS"/>
    <property type="molecule type" value="Genomic_DNA"/>
</dbReference>
<dbReference type="EMBL" id="AC105210">
    <property type="status" value="NOT_ANNOTATED_CDS"/>
    <property type="molecule type" value="Genomic_DNA"/>
</dbReference>
<dbReference type="EMBL" id="BC067516">
    <property type="protein sequence ID" value="AAH67516.1"/>
    <property type="molecule type" value="mRNA"/>
</dbReference>
<dbReference type="EMBL" id="BC067517">
    <property type="protein sequence ID" value="AAH67517.1"/>
    <property type="molecule type" value="mRNA"/>
</dbReference>
<dbReference type="EMBL" id="BC067518">
    <property type="protein sequence ID" value="AAH67518.1"/>
    <property type="molecule type" value="mRNA"/>
</dbReference>
<dbReference type="EMBL" id="BC075056">
    <property type="protein sequence ID" value="AAH75056.1"/>
    <property type="molecule type" value="mRNA"/>
</dbReference>
<dbReference type="EMBL" id="BC075057">
    <property type="protein sequence ID" value="AAH75057.1"/>
    <property type="molecule type" value="mRNA"/>
</dbReference>
<dbReference type="EMBL" id="BC112899">
    <property type="protein sequence ID" value="AAI12900.1"/>
    <property type="molecule type" value="mRNA"/>
</dbReference>
<dbReference type="CCDS" id="CCDS34957.1">
    <molecule id="O75123-1"/>
</dbReference>
<dbReference type="CCDS" id="CCDS47931.1">
    <molecule id="O75123-2"/>
</dbReference>
<dbReference type="RefSeq" id="NP_001075949.1">
    <molecule id="O75123-2"/>
    <property type="nucleotide sequence ID" value="NM_001082480.2"/>
</dbReference>
<dbReference type="RefSeq" id="NP_001248772.1">
    <molecule id="O75123-2"/>
    <property type="nucleotide sequence ID" value="NM_001261843.2"/>
</dbReference>
<dbReference type="RefSeq" id="NP_055604.3">
    <molecule id="O75123-1"/>
    <property type="nucleotide sequence ID" value="NM_014789.3"/>
</dbReference>
<dbReference type="RefSeq" id="XP_006716771.1">
    <molecule id="O75123-2"/>
    <property type="nucleotide sequence ID" value="XM_006716708.4"/>
</dbReference>
<dbReference type="RefSeq" id="XP_047278454.1">
    <molecule id="O75123-2"/>
    <property type="nucleotide sequence ID" value="XM_047422498.1"/>
</dbReference>
<dbReference type="RefSeq" id="XP_047278455.1">
    <molecule id="O75123-2"/>
    <property type="nucleotide sequence ID" value="XM_047422499.1"/>
</dbReference>
<dbReference type="RefSeq" id="XP_047278456.1">
    <molecule id="O75123-2"/>
    <property type="nucleotide sequence ID" value="XM_047422500.1"/>
</dbReference>
<dbReference type="RefSeq" id="XP_047278457.1">
    <molecule id="O75123-2"/>
    <property type="nucleotide sequence ID" value="XM_047422501.1"/>
</dbReference>
<dbReference type="RefSeq" id="XP_054184753.1">
    <molecule id="O75123-2"/>
    <property type="nucleotide sequence ID" value="XM_054328778.1"/>
</dbReference>
<dbReference type="RefSeq" id="XP_054184754.1">
    <molecule id="O75123-2"/>
    <property type="nucleotide sequence ID" value="XM_054328779.1"/>
</dbReference>
<dbReference type="RefSeq" id="XP_054184755.1">
    <molecule id="O75123-2"/>
    <property type="nucleotide sequence ID" value="XM_054328780.1"/>
</dbReference>
<dbReference type="RefSeq" id="XP_054184756.1">
    <molecule id="O75123-2"/>
    <property type="nucleotide sequence ID" value="XM_054328781.1"/>
</dbReference>
<dbReference type="RefSeq" id="XP_054184757.1">
    <molecule id="O75123-2"/>
    <property type="nucleotide sequence ID" value="XM_054328782.1"/>
</dbReference>
<dbReference type="RefSeq" id="XP_054184758.1">
    <molecule id="O75123-2"/>
    <property type="nucleotide sequence ID" value="XM_054328783.1"/>
</dbReference>
<dbReference type="RefSeq" id="XP_054217608.1">
    <molecule id="O75123-2"/>
    <property type="nucleotide sequence ID" value="XM_054361633.1"/>
</dbReference>
<dbReference type="RefSeq" id="XP_054217609.1">
    <molecule id="O75123-2"/>
    <property type="nucleotide sequence ID" value="XM_054361634.1"/>
</dbReference>
<dbReference type="RefSeq" id="XP_054217610.1">
    <molecule id="O75123-2"/>
    <property type="nucleotide sequence ID" value="XM_054361635.1"/>
</dbReference>
<dbReference type="RefSeq" id="XP_054217611.1">
    <molecule id="O75123-2"/>
    <property type="nucleotide sequence ID" value="XM_054361636.1"/>
</dbReference>
<dbReference type="SMR" id="O75123"/>
<dbReference type="BioGRID" id="115169">
    <property type="interactions" value="10"/>
</dbReference>
<dbReference type="FunCoup" id="O75123">
    <property type="interactions" value="8"/>
</dbReference>
<dbReference type="IntAct" id="O75123">
    <property type="interactions" value="6"/>
</dbReference>
<dbReference type="MINT" id="O75123"/>
<dbReference type="STRING" id="9606.ENSP00000445979"/>
<dbReference type="iPTMnet" id="O75123"/>
<dbReference type="PhosphoSitePlus" id="O75123"/>
<dbReference type="BioMuta" id="ZNF623"/>
<dbReference type="jPOST" id="O75123"/>
<dbReference type="MassIVE" id="O75123"/>
<dbReference type="PaxDb" id="9606-ENSP00000445979"/>
<dbReference type="PeptideAtlas" id="O75123"/>
<dbReference type="ProteomicsDB" id="17232"/>
<dbReference type="ProteomicsDB" id="49779">
    <molecule id="O75123-1"/>
</dbReference>
<dbReference type="Antibodypedia" id="48612">
    <property type="antibodies" value="53 antibodies from 15 providers"/>
</dbReference>
<dbReference type="DNASU" id="9831"/>
<dbReference type="Ensembl" id="ENST00000458270.2">
    <molecule id="O75123-2"/>
    <property type="protein sequence ID" value="ENSP00000411139.2"/>
    <property type="gene ID" value="ENSG00000183309.12"/>
</dbReference>
<dbReference type="Ensembl" id="ENST00000501748.3">
    <molecule id="O75123-1"/>
    <property type="protein sequence ID" value="ENSP00000445979.1"/>
    <property type="gene ID" value="ENSG00000183309.12"/>
</dbReference>
<dbReference type="Ensembl" id="ENST00000526926.6">
    <molecule id="O75123-2"/>
    <property type="protein sequence ID" value="ENSP00000435232.1"/>
    <property type="gene ID" value="ENSG00000183309.12"/>
</dbReference>
<dbReference type="Ensembl" id="ENST00000618766.2">
    <molecule id="O75123-2"/>
    <property type="protein sequence ID" value="ENSP00000481049.1"/>
    <property type="gene ID" value="ENSG00000276340.4"/>
</dbReference>
<dbReference type="Ensembl" id="ENST00000620499.4">
    <molecule id="O75123-2"/>
    <property type="protein sequence ID" value="ENSP00000484164.1"/>
    <property type="gene ID" value="ENSG00000276340.4"/>
</dbReference>
<dbReference type="Ensembl" id="ENST00000633071.1">
    <molecule id="O75123-1"/>
    <property type="protein sequence ID" value="ENSP00000487869.1"/>
    <property type="gene ID" value="ENSG00000276340.4"/>
</dbReference>
<dbReference type="GeneID" id="9831"/>
<dbReference type="KEGG" id="hsa:9831"/>
<dbReference type="MANE-Select" id="ENST00000526926.6">
    <molecule id="O75123-2"/>
    <property type="protein sequence ID" value="ENSP00000435232.1"/>
    <property type="RefSeq nucleotide sequence ID" value="NM_001261843.2"/>
    <property type="RefSeq protein sequence ID" value="NP_001248772.1"/>
</dbReference>
<dbReference type="UCSC" id="uc003yzd.3">
    <molecule id="O75123-1"/>
    <property type="organism name" value="human"/>
</dbReference>
<dbReference type="AGR" id="HGNC:29084"/>
<dbReference type="CTD" id="9831"/>
<dbReference type="DisGeNET" id="9831"/>
<dbReference type="GeneCards" id="ZNF623"/>
<dbReference type="HGNC" id="HGNC:29084">
    <property type="gene designation" value="ZNF623"/>
</dbReference>
<dbReference type="HPA" id="ENSG00000183309">
    <property type="expression patterns" value="Low tissue specificity"/>
</dbReference>
<dbReference type="neXtProt" id="NX_O75123"/>
<dbReference type="OpenTargets" id="ENSG00000183309"/>
<dbReference type="PharmGKB" id="PA134969295"/>
<dbReference type="VEuPathDB" id="HostDB:ENSG00000183309"/>
<dbReference type="eggNOG" id="KOG1721">
    <property type="taxonomic scope" value="Eukaryota"/>
</dbReference>
<dbReference type="GeneTree" id="ENSGT00940000163183"/>
<dbReference type="HOGENOM" id="CLU_002678_44_12_1"/>
<dbReference type="InParanoid" id="O75123"/>
<dbReference type="OrthoDB" id="6591996at2759"/>
<dbReference type="PAN-GO" id="O75123">
    <property type="GO annotations" value="4 GO annotations based on evolutionary models"/>
</dbReference>
<dbReference type="PhylomeDB" id="O75123"/>
<dbReference type="TreeFam" id="TF337005"/>
<dbReference type="PathwayCommons" id="O75123"/>
<dbReference type="SignaLink" id="O75123"/>
<dbReference type="BioGRID-ORCS" id="9831">
    <property type="hits" value="15 hits in 1178 CRISPR screens"/>
</dbReference>
<dbReference type="ChiTaRS" id="ZNF623">
    <property type="organism name" value="human"/>
</dbReference>
<dbReference type="GenomeRNAi" id="9831"/>
<dbReference type="Pharos" id="O75123">
    <property type="development level" value="Tdark"/>
</dbReference>
<dbReference type="PRO" id="PR:O75123"/>
<dbReference type="Proteomes" id="UP000005640">
    <property type="component" value="Chromosome 8"/>
</dbReference>
<dbReference type="RNAct" id="O75123">
    <property type="molecule type" value="protein"/>
</dbReference>
<dbReference type="Bgee" id="ENSG00000183309">
    <property type="expression patterns" value="Expressed in cortical plate and 110 other cell types or tissues"/>
</dbReference>
<dbReference type="GO" id="GO:0005634">
    <property type="term" value="C:nucleus"/>
    <property type="evidence" value="ECO:0000318"/>
    <property type="project" value="GO_Central"/>
</dbReference>
<dbReference type="GO" id="GO:0000981">
    <property type="term" value="F:DNA-binding transcription factor activity, RNA polymerase II-specific"/>
    <property type="evidence" value="ECO:0000318"/>
    <property type="project" value="GO_Central"/>
</dbReference>
<dbReference type="GO" id="GO:0000978">
    <property type="term" value="F:RNA polymerase II cis-regulatory region sequence-specific DNA binding"/>
    <property type="evidence" value="ECO:0000318"/>
    <property type="project" value="GO_Central"/>
</dbReference>
<dbReference type="GO" id="GO:0008270">
    <property type="term" value="F:zinc ion binding"/>
    <property type="evidence" value="ECO:0007669"/>
    <property type="project" value="UniProtKB-KW"/>
</dbReference>
<dbReference type="GO" id="GO:0006357">
    <property type="term" value="P:regulation of transcription by RNA polymerase II"/>
    <property type="evidence" value="ECO:0000318"/>
    <property type="project" value="GO_Central"/>
</dbReference>
<dbReference type="FunFam" id="3.30.160.60:FF:003848">
    <property type="match status" value="1"/>
</dbReference>
<dbReference type="FunFam" id="3.30.160.60:FF:002110">
    <property type="entry name" value="Zinc finger protein 1053"/>
    <property type="match status" value="1"/>
</dbReference>
<dbReference type="FunFam" id="3.30.160.60:FF:000424">
    <property type="entry name" value="Zinc finger protein 140"/>
    <property type="match status" value="1"/>
</dbReference>
<dbReference type="FunFam" id="3.30.160.60:FF:000295">
    <property type="entry name" value="zinc finger protein 19"/>
    <property type="match status" value="1"/>
</dbReference>
<dbReference type="FunFam" id="3.30.160.60:FF:000348">
    <property type="entry name" value="zinc finger protein 260"/>
    <property type="match status" value="1"/>
</dbReference>
<dbReference type="FunFam" id="3.30.160.60:FF:000352">
    <property type="entry name" value="zinc finger protein 3 homolog"/>
    <property type="match status" value="2"/>
</dbReference>
<dbReference type="FunFam" id="3.30.160.60:FF:000737">
    <property type="entry name" value="Zinc finger protein 565"/>
    <property type="match status" value="1"/>
</dbReference>
<dbReference type="FunFam" id="3.30.160.60:FF:001697">
    <property type="entry name" value="zinc finger protein 623"/>
    <property type="match status" value="3"/>
</dbReference>
<dbReference type="FunFam" id="3.30.160.60:FF:002143">
    <property type="entry name" value="zinc finger protein 623"/>
    <property type="match status" value="1"/>
</dbReference>
<dbReference type="FunFam" id="3.30.160.60:FF:002357">
    <property type="entry name" value="Zinc finger protein 782"/>
    <property type="match status" value="1"/>
</dbReference>
<dbReference type="Gene3D" id="3.30.160.60">
    <property type="entry name" value="Classic Zinc Finger"/>
    <property type="match status" value="14"/>
</dbReference>
<dbReference type="InterPro" id="IPR036236">
    <property type="entry name" value="Znf_C2H2_sf"/>
</dbReference>
<dbReference type="InterPro" id="IPR013087">
    <property type="entry name" value="Znf_C2H2_type"/>
</dbReference>
<dbReference type="PANTHER" id="PTHR24408">
    <property type="entry name" value="ZINC FINGER PROTEIN"/>
    <property type="match status" value="1"/>
</dbReference>
<dbReference type="PANTHER" id="PTHR24408:SF34">
    <property type="entry name" value="ZINC FINGER PROTEIN 672-RELATED"/>
    <property type="match status" value="1"/>
</dbReference>
<dbReference type="Pfam" id="PF00096">
    <property type="entry name" value="zf-C2H2"/>
    <property type="match status" value="13"/>
</dbReference>
<dbReference type="SMART" id="SM00355">
    <property type="entry name" value="ZnF_C2H2"/>
    <property type="match status" value="13"/>
</dbReference>
<dbReference type="SUPFAM" id="SSF57667">
    <property type="entry name" value="beta-beta-alpha zinc fingers"/>
    <property type="match status" value="7"/>
</dbReference>
<dbReference type="PROSITE" id="PS00028">
    <property type="entry name" value="ZINC_FINGER_C2H2_1"/>
    <property type="match status" value="13"/>
</dbReference>
<dbReference type="PROSITE" id="PS50157">
    <property type="entry name" value="ZINC_FINGER_C2H2_2"/>
    <property type="match status" value="13"/>
</dbReference>
<organism>
    <name type="scientific">Homo sapiens</name>
    <name type="common">Human</name>
    <dbReference type="NCBI Taxonomy" id="9606"/>
    <lineage>
        <taxon>Eukaryota</taxon>
        <taxon>Metazoa</taxon>
        <taxon>Chordata</taxon>
        <taxon>Craniata</taxon>
        <taxon>Vertebrata</taxon>
        <taxon>Euteleostomi</taxon>
        <taxon>Mammalia</taxon>
        <taxon>Eutheria</taxon>
        <taxon>Euarchontoglires</taxon>
        <taxon>Primates</taxon>
        <taxon>Haplorrhini</taxon>
        <taxon>Catarrhini</taxon>
        <taxon>Hominidae</taxon>
        <taxon>Homo</taxon>
    </lineage>
</organism>
<name>ZN623_HUMAN</name>
<feature type="chain" id="PRO_0000047694" description="Zinc finger protein 623">
    <location>
        <begin position="1"/>
        <end position="536"/>
    </location>
</feature>
<feature type="zinc finger region" description="C2H2-type 1" evidence="1">
    <location>
        <begin position="123"/>
        <end position="145"/>
    </location>
</feature>
<feature type="zinc finger region" description="C2H2-type 2" evidence="1">
    <location>
        <begin position="151"/>
        <end position="173"/>
    </location>
</feature>
<feature type="zinc finger region" description="C2H2-type 3" evidence="1">
    <location>
        <begin position="179"/>
        <end position="201"/>
    </location>
</feature>
<feature type="zinc finger region" description="C2H2-type 4" evidence="1">
    <location>
        <begin position="207"/>
        <end position="229"/>
    </location>
</feature>
<feature type="zinc finger region" description="C2H2-type 5" evidence="1">
    <location>
        <begin position="235"/>
        <end position="257"/>
    </location>
</feature>
<feature type="zinc finger region" description="C2H2-type 6" evidence="1">
    <location>
        <begin position="263"/>
        <end position="285"/>
    </location>
</feature>
<feature type="zinc finger region" description="C2H2-type 7" evidence="1">
    <location>
        <begin position="291"/>
        <end position="313"/>
    </location>
</feature>
<feature type="zinc finger region" description="C2H2-type 8" evidence="1">
    <location>
        <begin position="319"/>
        <end position="341"/>
    </location>
</feature>
<feature type="zinc finger region" description="C2H2-type 9" evidence="1">
    <location>
        <begin position="347"/>
        <end position="369"/>
    </location>
</feature>
<feature type="zinc finger region" description="C2H2-type 10" evidence="1">
    <location>
        <begin position="375"/>
        <end position="397"/>
    </location>
</feature>
<feature type="zinc finger region" description="C2H2-type 11" evidence="1">
    <location>
        <begin position="403"/>
        <end position="425"/>
    </location>
</feature>
<feature type="zinc finger region" description="C2H2-type 12" evidence="1">
    <location>
        <begin position="431"/>
        <end position="453"/>
    </location>
</feature>
<feature type="zinc finger region" description="C2H2-type 13" evidence="1">
    <location>
        <begin position="459"/>
        <end position="481"/>
    </location>
</feature>
<feature type="region of interest" description="Disordered" evidence="2">
    <location>
        <begin position="57"/>
        <end position="77"/>
    </location>
</feature>
<feature type="region of interest" description="Disordered" evidence="2">
    <location>
        <begin position="513"/>
        <end position="536"/>
    </location>
</feature>
<feature type="compositionally biased region" description="Polar residues" evidence="2">
    <location>
        <begin position="64"/>
        <end position="74"/>
    </location>
</feature>
<feature type="compositionally biased region" description="Basic and acidic residues" evidence="2">
    <location>
        <begin position="522"/>
        <end position="536"/>
    </location>
</feature>
<feature type="cross-link" description="Glycyl lysine isopeptide (Lys-Gly) (interchain with G-Cter in SUMO2)" evidence="5">
    <location>
        <position position="445"/>
    </location>
</feature>
<feature type="splice variant" id="VSP_053501" description="In isoform 2." evidence="3">
    <location>
        <begin position="1"/>
        <end position="40"/>
    </location>
</feature>
<feature type="sequence variant" id="VAR_052881" description="In dbSNP:rs4874084.">
    <original>D</original>
    <variation>N</variation>
    <location>
        <position position="126"/>
    </location>
</feature>
<accession>O75123</accession>
<accession>A4FU80</accession>
<accession>B4DGP3</accession>
<accession>E7ENV5</accession>
<sequence length="536" mass="61393">MILLSFVSDSNVGTGEKKVTEAWISEDENSHRTTSDRLTVMELPSPESEEVHEPRLGELLGNPEGQSLGSSPSQDRGCKQVTVTHWKIQTGETAQVCTKSGRNHILNSDLLLLQRELIEGEANPCDICGKTFTFNSDLVRHRISHAGEKPYTCDQCGKGFGQSSHLMEHQRIHTGERLYVCNVCGKDFIHYSGLIEHQRVHSGEKPFKCAQCGKAFCHSSDLIRHQRVHTRERPFECKECGKGFSQSSLLIRHQRIHTGERPYECNECGKSFIRSSSLIRHYQIHTEVKQYECKECGKAFRHRSDLIEHQRIHTGERPFECNECGKAFIRSSKLIQHQRIHTGERPYVCNECGKRFSQTSNFTQHQRIHTGEKLYECNECGKAFFLSSYLIRHQKIHTGERVYECKECGKAFLQKAHLTEHQKIHSGDRPFECKDCGKAFIQSSKLLLHQIIHTGEKPYVCSYCGKGFIQRSNFLQHQKIHTEEKLYECSQYGRDFNSTTNVKNNQRVHQEGLSLSKAPIHLGERSVDKGEHTGNL</sequence>
<protein>
    <recommendedName>
        <fullName>Zinc finger protein 623</fullName>
    </recommendedName>
</protein>
<keyword id="KW-0025">Alternative splicing</keyword>
<keyword id="KW-0238">DNA-binding</keyword>
<keyword id="KW-1017">Isopeptide bond</keyword>
<keyword id="KW-0479">Metal-binding</keyword>
<keyword id="KW-0539">Nucleus</keyword>
<keyword id="KW-1267">Proteomics identification</keyword>
<keyword id="KW-1185">Reference proteome</keyword>
<keyword id="KW-0677">Repeat</keyword>
<keyword id="KW-0804">Transcription</keyword>
<keyword id="KW-0805">Transcription regulation</keyword>
<keyword id="KW-0832">Ubl conjugation</keyword>
<keyword id="KW-0862">Zinc</keyword>
<keyword id="KW-0863">Zinc-finger</keyword>
<gene>
    <name type="primary">ZNF623</name>
    <name type="synonym">KIAA0628</name>
</gene>
<reference key="1">
    <citation type="journal article" date="1998" name="DNA Res.">
        <title>Prediction of the coding sequences of unidentified human genes. X. The complete sequences of 100 new cDNA clones from brain which can code for large proteins in vitro.</title>
        <authorList>
            <person name="Ishikawa K."/>
            <person name="Nagase T."/>
            <person name="Suyama M."/>
            <person name="Miyajima N."/>
            <person name="Tanaka A."/>
            <person name="Kotani H."/>
            <person name="Nomura N."/>
            <person name="Ohara O."/>
        </authorList>
    </citation>
    <scope>NUCLEOTIDE SEQUENCE [LARGE SCALE MRNA] (ISOFORM 1)</scope>
    <source>
        <tissue>Brain</tissue>
    </source>
</reference>
<reference key="2">
    <citation type="journal article" date="2004" name="Nat. Genet.">
        <title>Complete sequencing and characterization of 21,243 full-length human cDNAs.</title>
        <authorList>
            <person name="Ota T."/>
            <person name="Suzuki Y."/>
            <person name="Nishikawa T."/>
            <person name="Otsuki T."/>
            <person name="Sugiyama T."/>
            <person name="Irie R."/>
            <person name="Wakamatsu A."/>
            <person name="Hayashi K."/>
            <person name="Sato H."/>
            <person name="Nagai K."/>
            <person name="Kimura K."/>
            <person name="Makita H."/>
            <person name="Sekine M."/>
            <person name="Obayashi M."/>
            <person name="Nishi T."/>
            <person name="Shibahara T."/>
            <person name="Tanaka T."/>
            <person name="Ishii S."/>
            <person name="Yamamoto J."/>
            <person name="Saito K."/>
            <person name="Kawai Y."/>
            <person name="Isono Y."/>
            <person name="Nakamura Y."/>
            <person name="Nagahari K."/>
            <person name="Murakami K."/>
            <person name="Yasuda T."/>
            <person name="Iwayanagi T."/>
            <person name="Wagatsuma M."/>
            <person name="Shiratori A."/>
            <person name="Sudo H."/>
            <person name="Hosoiri T."/>
            <person name="Kaku Y."/>
            <person name="Kodaira H."/>
            <person name="Kondo H."/>
            <person name="Sugawara M."/>
            <person name="Takahashi M."/>
            <person name="Kanda K."/>
            <person name="Yokoi T."/>
            <person name="Furuya T."/>
            <person name="Kikkawa E."/>
            <person name="Omura Y."/>
            <person name="Abe K."/>
            <person name="Kamihara K."/>
            <person name="Katsuta N."/>
            <person name="Sato K."/>
            <person name="Tanikawa M."/>
            <person name="Yamazaki M."/>
            <person name="Ninomiya K."/>
            <person name="Ishibashi T."/>
            <person name="Yamashita H."/>
            <person name="Murakawa K."/>
            <person name="Fujimori K."/>
            <person name="Tanai H."/>
            <person name="Kimata M."/>
            <person name="Watanabe M."/>
            <person name="Hiraoka S."/>
            <person name="Chiba Y."/>
            <person name="Ishida S."/>
            <person name="Ono Y."/>
            <person name="Takiguchi S."/>
            <person name="Watanabe S."/>
            <person name="Yosida M."/>
            <person name="Hotuta T."/>
            <person name="Kusano J."/>
            <person name="Kanehori K."/>
            <person name="Takahashi-Fujii A."/>
            <person name="Hara H."/>
            <person name="Tanase T.-O."/>
            <person name="Nomura Y."/>
            <person name="Togiya S."/>
            <person name="Komai F."/>
            <person name="Hara R."/>
            <person name="Takeuchi K."/>
            <person name="Arita M."/>
            <person name="Imose N."/>
            <person name="Musashino K."/>
            <person name="Yuuki H."/>
            <person name="Oshima A."/>
            <person name="Sasaki N."/>
            <person name="Aotsuka S."/>
            <person name="Yoshikawa Y."/>
            <person name="Matsunawa H."/>
            <person name="Ichihara T."/>
            <person name="Shiohata N."/>
            <person name="Sano S."/>
            <person name="Moriya S."/>
            <person name="Momiyama H."/>
            <person name="Satoh N."/>
            <person name="Takami S."/>
            <person name="Terashima Y."/>
            <person name="Suzuki O."/>
            <person name="Nakagawa S."/>
            <person name="Senoh A."/>
            <person name="Mizoguchi H."/>
            <person name="Goto Y."/>
            <person name="Shimizu F."/>
            <person name="Wakebe H."/>
            <person name="Hishigaki H."/>
            <person name="Watanabe T."/>
            <person name="Sugiyama A."/>
            <person name="Takemoto M."/>
            <person name="Kawakami B."/>
            <person name="Yamazaki M."/>
            <person name="Watanabe K."/>
            <person name="Kumagai A."/>
            <person name="Itakura S."/>
            <person name="Fukuzumi Y."/>
            <person name="Fujimori Y."/>
            <person name="Komiyama M."/>
            <person name="Tashiro H."/>
            <person name="Tanigami A."/>
            <person name="Fujiwara T."/>
            <person name="Ono T."/>
            <person name="Yamada K."/>
            <person name="Fujii Y."/>
            <person name="Ozaki K."/>
            <person name="Hirao M."/>
            <person name="Ohmori Y."/>
            <person name="Kawabata A."/>
            <person name="Hikiji T."/>
            <person name="Kobatake N."/>
            <person name="Inagaki H."/>
            <person name="Ikema Y."/>
            <person name="Okamoto S."/>
            <person name="Okitani R."/>
            <person name="Kawakami T."/>
            <person name="Noguchi S."/>
            <person name="Itoh T."/>
            <person name="Shigeta K."/>
            <person name="Senba T."/>
            <person name="Matsumura K."/>
            <person name="Nakajima Y."/>
            <person name="Mizuno T."/>
            <person name="Morinaga M."/>
            <person name="Sasaki M."/>
            <person name="Togashi T."/>
            <person name="Oyama M."/>
            <person name="Hata H."/>
            <person name="Watanabe M."/>
            <person name="Komatsu T."/>
            <person name="Mizushima-Sugano J."/>
            <person name="Satoh T."/>
            <person name="Shirai Y."/>
            <person name="Takahashi Y."/>
            <person name="Nakagawa K."/>
            <person name="Okumura K."/>
            <person name="Nagase T."/>
            <person name="Nomura N."/>
            <person name="Kikuchi H."/>
            <person name="Masuho Y."/>
            <person name="Yamashita R."/>
            <person name="Nakai K."/>
            <person name="Yada T."/>
            <person name="Nakamura Y."/>
            <person name="Ohara O."/>
            <person name="Isogai T."/>
            <person name="Sugano S."/>
        </authorList>
    </citation>
    <scope>NUCLEOTIDE SEQUENCE [LARGE SCALE MRNA] (ISOFORM 2)</scope>
    <source>
        <tissue>Brain</tissue>
    </source>
</reference>
<reference key="3">
    <citation type="journal article" date="2006" name="Nature">
        <title>DNA sequence and analysis of human chromosome 8.</title>
        <authorList>
            <person name="Nusbaum C."/>
            <person name="Mikkelsen T.S."/>
            <person name="Zody M.C."/>
            <person name="Asakawa S."/>
            <person name="Taudien S."/>
            <person name="Garber M."/>
            <person name="Kodira C.D."/>
            <person name="Schueler M.G."/>
            <person name="Shimizu A."/>
            <person name="Whittaker C.A."/>
            <person name="Chang J.L."/>
            <person name="Cuomo C.A."/>
            <person name="Dewar K."/>
            <person name="FitzGerald M.G."/>
            <person name="Yang X."/>
            <person name="Allen N.R."/>
            <person name="Anderson S."/>
            <person name="Asakawa T."/>
            <person name="Blechschmidt K."/>
            <person name="Bloom T."/>
            <person name="Borowsky M.L."/>
            <person name="Butler J."/>
            <person name="Cook A."/>
            <person name="Corum B."/>
            <person name="DeArellano K."/>
            <person name="DeCaprio D."/>
            <person name="Dooley K.T."/>
            <person name="Dorris L. III"/>
            <person name="Engels R."/>
            <person name="Gloeckner G."/>
            <person name="Hafez N."/>
            <person name="Hagopian D.S."/>
            <person name="Hall J.L."/>
            <person name="Ishikawa S.K."/>
            <person name="Jaffe D.B."/>
            <person name="Kamat A."/>
            <person name="Kudoh J."/>
            <person name="Lehmann R."/>
            <person name="Lokitsang T."/>
            <person name="Macdonald P."/>
            <person name="Major J.E."/>
            <person name="Matthews C.D."/>
            <person name="Mauceli E."/>
            <person name="Menzel U."/>
            <person name="Mihalev A.H."/>
            <person name="Minoshima S."/>
            <person name="Murayama Y."/>
            <person name="Naylor J.W."/>
            <person name="Nicol R."/>
            <person name="Nguyen C."/>
            <person name="O'Leary S.B."/>
            <person name="O'Neill K."/>
            <person name="Parker S.C.J."/>
            <person name="Polley A."/>
            <person name="Raymond C.K."/>
            <person name="Reichwald K."/>
            <person name="Rodriguez J."/>
            <person name="Sasaki T."/>
            <person name="Schilhabel M."/>
            <person name="Siddiqui R."/>
            <person name="Smith C.L."/>
            <person name="Sneddon T.P."/>
            <person name="Talamas J.A."/>
            <person name="Tenzin P."/>
            <person name="Topham K."/>
            <person name="Venkataraman V."/>
            <person name="Wen G."/>
            <person name="Yamazaki S."/>
            <person name="Young S.K."/>
            <person name="Zeng Q."/>
            <person name="Zimmer A.R."/>
            <person name="Rosenthal A."/>
            <person name="Birren B.W."/>
            <person name="Platzer M."/>
            <person name="Shimizu N."/>
            <person name="Lander E.S."/>
        </authorList>
    </citation>
    <scope>NUCLEOTIDE SEQUENCE [LARGE SCALE GENOMIC DNA]</scope>
</reference>
<reference key="4">
    <citation type="journal article" date="2004" name="Genome Res.">
        <title>The status, quality, and expansion of the NIH full-length cDNA project: the Mammalian Gene Collection (MGC).</title>
        <authorList>
            <consortium name="The MGC Project Team"/>
        </authorList>
    </citation>
    <scope>NUCLEOTIDE SEQUENCE [LARGE SCALE MRNA] (ISOFORM 1)</scope>
    <source>
        <tissue>Brain</tissue>
        <tissue>Liver</tissue>
    </source>
</reference>
<reference key="5">
    <citation type="journal article" date="2017" name="Nat. Struct. Mol. Biol.">
        <title>Site-specific mapping of the human SUMO proteome reveals co-modification with phosphorylation.</title>
        <authorList>
            <person name="Hendriks I.A."/>
            <person name="Lyon D."/>
            <person name="Young C."/>
            <person name="Jensen L.J."/>
            <person name="Vertegaal A.C."/>
            <person name="Nielsen M.L."/>
        </authorList>
    </citation>
    <scope>SUMOYLATION [LARGE SCALE ANALYSIS] AT LYS-445</scope>
    <scope>IDENTIFICATION BY MASS SPECTROMETRY [LARGE SCALE ANALYSIS]</scope>
</reference>
<evidence type="ECO:0000255" key="1">
    <source>
        <dbReference type="PROSITE-ProRule" id="PRU00042"/>
    </source>
</evidence>
<evidence type="ECO:0000256" key="2">
    <source>
        <dbReference type="SAM" id="MobiDB-lite"/>
    </source>
</evidence>
<evidence type="ECO:0000303" key="3">
    <source>
    </source>
</evidence>
<evidence type="ECO:0000305" key="4"/>
<evidence type="ECO:0007744" key="5">
    <source>
    </source>
</evidence>
<comment type="function">
    <text>May be involved in transcriptional regulation.</text>
</comment>
<comment type="interaction">
    <interactant intactId="EBI-18560922">
        <id>O75123</id>
    </interactant>
    <interactant intactId="EBI-7254550">
        <id>P36508</id>
        <label>ZNF76</label>
    </interactant>
    <organismsDiffer>false</organismsDiffer>
    <experiments>3</experiments>
</comment>
<comment type="subcellular location">
    <subcellularLocation>
        <location evidence="4">Nucleus</location>
    </subcellularLocation>
</comment>
<comment type="alternative products">
    <event type="alternative splicing"/>
    <isoform>
        <id>O75123-1</id>
        <name>1</name>
        <sequence type="displayed"/>
    </isoform>
    <isoform>
        <id>O75123-2</id>
        <name>2</name>
        <sequence type="described" ref="VSP_053501"/>
    </isoform>
</comment>
<comment type="similarity">
    <text evidence="4">Belongs to the krueppel C2H2-type zinc-finger protein family.</text>
</comment>
<comment type="sequence caution" evidence="4">
    <conflict type="erroneous initiation">
        <sequence resource="EMBL-CDS" id="BAA31603"/>
    </conflict>
    <text>Extended N-terminus.</text>
</comment>
<comment type="sequence caution" evidence="4">
    <conflict type="frameshift">
        <sequence resource="EMBL-CDS" id="BAG57854"/>
    </conflict>
</comment>